<sequence length="318" mass="34345">MPREDRATWKSNYFLKIIQLLDDYPKCFIVGADNVGSKQMQQIRMSLRGKAVVLMGKNTMMRKAIRGHLENNPALEKLLPHIRGNVGFVFTKEDLTEIRDMLLANKVPAAARAGAIAPCEVTVPAQNTGLGPEKTSFFQALGITTKISRGTIEILSDVQLIKTGDKVGASEATLLNMLNISPFSFGLIIQQVFDNGSIYNPEVLDITEDTLHSRFLEGVRNVASVCLQIGYPTVASVPHSIINGYKRVLALSVETEYTFPLAEKVKAFLADPSAFVAAAPVAAASTAAPAAAAAAPAKVEAKEESEESDEDMGFGLFD</sequence>
<name>RLA0_RABIT</name>
<feature type="chain" id="PRO_0000460135" description="Large ribosomal subunit protein uL10">
    <location>
        <begin position="1"/>
        <end position="318"/>
    </location>
</feature>
<feature type="region of interest" description="Disordered" evidence="3">
    <location>
        <begin position="298"/>
        <end position="318"/>
    </location>
</feature>
<feature type="compositionally biased region" description="Acidic residues" evidence="3">
    <location>
        <begin position="303"/>
        <end position="312"/>
    </location>
</feature>
<feature type="modified residue" description="Phosphotyrosine" evidence="2">
    <location>
        <position position="24"/>
    </location>
</feature>
<feature type="modified residue" description="Phosphothreonine" evidence="1">
    <location>
        <position position="59"/>
    </location>
</feature>
<feature type="modified residue" description="Phosphoserine" evidence="1">
    <location>
        <position position="305"/>
    </location>
</feature>
<feature type="modified residue" description="Phosphoserine" evidence="1">
    <location>
        <position position="308"/>
    </location>
</feature>
<feature type="cross-link" description="Glycyl lysine isopeptide (Lys-Gly) (interchain with G-Cter in ubiquitin)" evidence="1">
    <location>
        <position position="264"/>
    </location>
</feature>
<feature type="cross-link" description="Glycyl lysine isopeptide (Lys-Gly) (interchain with G-Cter in SUMO1); alternate" evidence="1">
    <location>
        <position position="298"/>
    </location>
</feature>
<feature type="cross-link" description="Glycyl lysine isopeptide (Lys-Gly) (interchain with G-Cter in SUMO2); alternate" evidence="1">
    <location>
        <position position="298"/>
    </location>
</feature>
<evidence type="ECO:0000250" key="1">
    <source>
        <dbReference type="UniProtKB" id="P05388"/>
    </source>
</evidence>
<evidence type="ECO:0000250" key="2">
    <source>
        <dbReference type="UniProtKB" id="P14869"/>
    </source>
</evidence>
<evidence type="ECO:0000256" key="3">
    <source>
        <dbReference type="SAM" id="MobiDB-lite"/>
    </source>
</evidence>
<evidence type="ECO:0000269" key="4">
    <source>
    </source>
</evidence>
<evidence type="ECO:0000269" key="5">
    <source>
    </source>
</evidence>
<evidence type="ECO:0000305" key="6"/>
<evidence type="ECO:0007744" key="7">
    <source>
        <dbReference type="PDB" id="6ZVK"/>
    </source>
</evidence>
<evidence type="ECO:0007744" key="8">
    <source>
        <dbReference type="PDB" id="7A01"/>
    </source>
</evidence>
<evidence type="ECO:0007744" key="9">
    <source>
        <dbReference type="PDB" id="7ZJW"/>
    </source>
</evidence>
<organism>
    <name type="scientific">Oryctolagus cuniculus</name>
    <name type="common">Rabbit</name>
    <dbReference type="NCBI Taxonomy" id="9986"/>
    <lineage>
        <taxon>Eukaryota</taxon>
        <taxon>Metazoa</taxon>
        <taxon>Chordata</taxon>
        <taxon>Craniata</taxon>
        <taxon>Vertebrata</taxon>
        <taxon>Euteleostomi</taxon>
        <taxon>Mammalia</taxon>
        <taxon>Eutheria</taxon>
        <taxon>Euarchontoglires</taxon>
        <taxon>Glires</taxon>
        <taxon>Lagomorpha</taxon>
        <taxon>Leporidae</taxon>
        <taxon>Oryctolagus</taxon>
    </lineage>
</organism>
<dbReference type="EMBL" id="AAGW02063848">
    <property type="status" value="NOT_ANNOTATED_CDS"/>
    <property type="molecule type" value="Genomic_DNA"/>
</dbReference>
<dbReference type="RefSeq" id="XP_002719840.1">
    <property type="nucleotide sequence ID" value="XM_002719794.2"/>
</dbReference>
<dbReference type="RefSeq" id="XP_069922101.1">
    <property type="nucleotide sequence ID" value="XM_070066000.1"/>
</dbReference>
<dbReference type="PDB" id="6ZVK">
    <property type="method" value="EM"/>
    <property type="resolution" value="3.49 A"/>
    <property type="chains" value="K2=5-202"/>
</dbReference>
<dbReference type="PDB" id="7A01">
    <property type="method" value="EM"/>
    <property type="resolution" value="3.60 A"/>
    <property type="chains" value="K2=5-202"/>
</dbReference>
<dbReference type="PDB" id="7NWG">
    <property type="method" value="EM"/>
    <property type="resolution" value="3.80 A"/>
    <property type="chains" value="t3=1-318"/>
</dbReference>
<dbReference type="PDB" id="7NWH">
    <property type="method" value="EM"/>
    <property type="resolution" value="4.10 A"/>
    <property type="chains" value="s=1-318"/>
</dbReference>
<dbReference type="PDB" id="7NWI">
    <property type="method" value="EM"/>
    <property type="resolution" value="3.13 A"/>
    <property type="chains" value="s=1-318"/>
</dbReference>
<dbReference type="PDB" id="7O7Y">
    <property type="method" value="EM"/>
    <property type="resolution" value="2.20 A"/>
    <property type="chains" value="Bs=1-318"/>
</dbReference>
<dbReference type="PDB" id="7O7Z">
    <property type="method" value="EM"/>
    <property type="resolution" value="2.40 A"/>
    <property type="chains" value="Bs=1-318"/>
</dbReference>
<dbReference type="PDB" id="7O80">
    <property type="method" value="EM"/>
    <property type="resolution" value="2.90 A"/>
    <property type="chains" value="Bs=1-318"/>
</dbReference>
<dbReference type="PDB" id="7O81">
    <property type="method" value="EM"/>
    <property type="resolution" value="3.10 A"/>
    <property type="chains" value="Bs=1-318"/>
</dbReference>
<dbReference type="PDB" id="7ZJW">
    <property type="method" value="EM"/>
    <property type="resolution" value="2.80 A"/>
    <property type="chains" value="Lt=1-318"/>
</dbReference>
<dbReference type="PDB" id="8BHF">
    <property type="method" value="EM"/>
    <property type="resolution" value="3.10 A"/>
    <property type="chains" value="e1=5-200"/>
</dbReference>
<dbReference type="PDB" id="8BPO">
    <property type="method" value="EM"/>
    <property type="resolution" value="2.80 A"/>
    <property type="chains" value="q2=1-318"/>
</dbReference>
<dbReference type="PDB" id="8BTK">
    <property type="method" value="EM"/>
    <property type="resolution" value="3.50 A"/>
    <property type="chains" value="Bs=1-318"/>
</dbReference>
<dbReference type="PDB" id="8P2K">
    <property type="method" value="EM"/>
    <property type="resolution" value="2.90 A"/>
    <property type="chains" value="Bs=1-318"/>
</dbReference>
<dbReference type="PDB" id="8SCB">
    <property type="method" value="EM"/>
    <property type="resolution" value="2.50 A"/>
    <property type="chains" value="s=1-318"/>
</dbReference>
<dbReference type="PDB" id="8VFT">
    <property type="method" value="EM"/>
    <property type="resolution" value="3.30 A"/>
    <property type="chains" value="s=1-318"/>
</dbReference>
<dbReference type="PDB" id="9BDN">
    <property type="method" value="EM"/>
    <property type="resolution" value="3.10 A"/>
    <property type="chains" value="ALP0=5-200"/>
</dbReference>
<dbReference type="PDB" id="9BDP">
    <property type="method" value="EM"/>
    <property type="resolution" value="3.70 A"/>
    <property type="chains" value="ALP0=5-200"/>
</dbReference>
<dbReference type="PDB" id="9F1B">
    <property type="method" value="EM"/>
    <property type="resolution" value="3.01 A"/>
    <property type="chains" value="Bs=1-318"/>
</dbReference>
<dbReference type="PDB" id="9F1C">
    <property type="method" value="EM"/>
    <property type="resolution" value="3.78 A"/>
    <property type="chains" value="Bs=1-318"/>
</dbReference>
<dbReference type="PDB" id="9F1D">
    <property type="method" value="EM"/>
    <property type="resolution" value="3.26 A"/>
    <property type="chains" value="Bs=1-318"/>
</dbReference>
<dbReference type="PDBsum" id="6ZVK"/>
<dbReference type="PDBsum" id="7A01"/>
<dbReference type="PDBsum" id="7NWG"/>
<dbReference type="PDBsum" id="7NWH"/>
<dbReference type="PDBsum" id="7NWI"/>
<dbReference type="PDBsum" id="7O7Y"/>
<dbReference type="PDBsum" id="7O7Z"/>
<dbReference type="PDBsum" id="7O80"/>
<dbReference type="PDBsum" id="7O81"/>
<dbReference type="PDBsum" id="7ZJW"/>
<dbReference type="PDBsum" id="8BHF"/>
<dbReference type="PDBsum" id="8BPO"/>
<dbReference type="PDBsum" id="8BTK"/>
<dbReference type="PDBsum" id="8P2K"/>
<dbReference type="PDBsum" id="8SCB"/>
<dbReference type="PDBsum" id="8VFT"/>
<dbReference type="PDBsum" id="9BDN"/>
<dbReference type="PDBsum" id="9BDP"/>
<dbReference type="PDBsum" id="9F1B"/>
<dbReference type="PDBsum" id="9F1C"/>
<dbReference type="PDBsum" id="9F1D"/>
<dbReference type="EMDB" id="EMD-0099"/>
<dbReference type="EMDB" id="EMD-0100"/>
<dbReference type="EMDB" id="EMD-0192"/>
<dbReference type="EMDB" id="EMD-0194"/>
<dbReference type="EMDB" id="EMD-0195"/>
<dbReference type="EMDB" id="EMD-0197"/>
<dbReference type="EMDB" id="EMD-10181"/>
<dbReference type="EMDB" id="EMD-10380"/>
<dbReference type="EMDB" id="EMD-11459"/>
<dbReference type="EMDB" id="EMD-11590"/>
<dbReference type="EMDB" id="EMD-12631"/>
<dbReference type="EMDB" id="EMD-12632"/>
<dbReference type="EMDB" id="EMD-12633"/>
<dbReference type="EMDB" id="EMD-12756"/>
<dbReference type="EMDB" id="EMD-12757"/>
<dbReference type="EMDB" id="EMD-12758"/>
<dbReference type="EMDB" id="EMD-12759"/>
<dbReference type="EMDB" id="EMD-14751"/>
<dbReference type="EMDB" id="EMD-16052"/>
<dbReference type="EMDB" id="EMD-16155"/>
<dbReference type="EMDB" id="EMD-16232"/>
<dbReference type="EMDB" id="EMD-17367"/>
<dbReference type="EMDB" id="EMD-40344"/>
<dbReference type="EMDB" id="EMD-4130"/>
<dbReference type="EMDB" id="EMD-4131"/>
<dbReference type="EMDB" id="EMD-4132"/>
<dbReference type="EMDB" id="EMD-4133"/>
<dbReference type="EMDB" id="EMD-4134"/>
<dbReference type="EMDB" id="EMD-4135"/>
<dbReference type="EMDB" id="EMD-4136"/>
<dbReference type="EMDB" id="EMD-4137"/>
<dbReference type="EMDB" id="EMD-4300"/>
<dbReference type="EMDB" id="EMD-43189"/>
<dbReference type="EMDB" id="EMD-44463"/>
<dbReference type="EMDB" id="EMD-44464"/>
<dbReference type="EMDB" id="EMD-50124"/>
<dbReference type="EMDB" id="EMD-50125"/>
<dbReference type="EMDB" id="EMD-50126"/>
<dbReference type="SMR" id="G1SPK4"/>
<dbReference type="FunCoup" id="G1SPK4">
    <property type="interactions" value="1460"/>
</dbReference>
<dbReference type="IntAct" id="G1SPK4">
    <property type="interactions" value="1"/>
</dbReference>
<dbReference type="STRING" id="9986.ENSOCUP00000004980"/>
<dbReference type="PaxDb" id="9986-ENSOCUP00000004980"/>
<dbReference type="Ensembl" id="ENSOCUT00000005748.4">
    <property type="protein sequence ID" value="ENSOCUP00000004980.4"/>
    <property type="gene ID" value="ENSOCUG00000005749.4"/>
</dbReference>
<dbReference type="GeneID" id="100009514"/>
<dbReference type="KEGG" id="ocu:100009514"/>
<dbReference type="CTD" id="6175"/>
<dbReference type="eggNOG" id="KOG0815">
    <property type="taxonomic scope" value="Eukaryota"/>
</dbReference>
<dbReference type="GeneTree" id="ENSGT00390000017839"/>
<dbReference type="HOGENOM" id="CLU_053173_1_1_1"/>
<dbReference type="InParanoid" id="G1SPK4"/>
<dbReference type="OrthoDB" id="10259902at2759"/>
<dbReference type="TreeFam" id="TF300849"/>
<dbReference type="Proteomes" id="UP000001811">
    <property type="component" value="Chromosome 21"/>
</dbReference>
<dbReference type="Bgee" id="ENSOCUG00000005749">
    <property type="expression patterns" value="Expressed in upper lobe of left lung and 14 other cell types or tissues"/>
</dbReference>
<dbReference type="GO" id="GO:0036464">
    <property type="term" value="C:cytoplasmic ribonucleoprotein granule"/>
    <property type="evidence" value="ECO:0007669"/>
    <property type="project" value="Ensembl"/>
</dbReference>
<dbReference type="GO" id="GO:0022625">
    <property type="term" value="C:cytosolic large ribosomal subunit"/>
    <property type="evidence" value="ECO:0007669"/>
    <property type="project" value="Ensembl"/>
</dbReference>
<dbReference type="GO" id="GO:0005783">
    <property type="term" value="C:endoplasmic reticulum"/>
    <property type="evidence" value="ECO:0007669"/>
    <property type="project" value="Ensembl"/>
</dbReference>
<dbReference type="GO" id="GO:0005634">
    <property type="term" value="C:nucleus"/>
    <property type="evidence" value="ECO:0007669"/>
    <property type="project" value="UniProtKB-SubCell"/>
</dbReference>
<dbReference type="GO" id="GO:0014069">
    <property type="term" value="C:postsynaptic density"/>
    <property type="evidence" value="ECO:0007669"/>
    <property type="project" value="Ensembl"/>
</dbReference>
<dbReference type="GO" id="GO:0070180">
    <property type="term" value="F:large ribosomal subunit rRNA binding"/>
    <property type="evidence" value="ECO:0007669"/>
    <property type="project" value="TreeGrafter"/>
</dbReference>
<dbReference type="GO" id="GO:0003735">
    <property type="term" value="F:structural constituent of ribosome"/>
    <property type="evidence" value="ECO:0007669"/>
    <property type="project" value="Ensembl"/>
</dbReference>
<dbReference type="GO" id="GO:0002181">
    <property type="term" value="P:cytoplasmic translation"/>
    <property type="evidence" value="ECO:0007669"/>
    <property type="project" value="TreeGrafter"/>
</dbReference>
<dbReference type="GO" id="GO:0000027">
    <property type="term" value="P:ribosomal large subunit assembly"/>
    <property type="evidence" value="ECO:0007669"/>
    <property type="project" value="TreeGrafter"/>
</dbReference>
<dbReference type="CDD" id="cd05795">
    <property type="entry name" value="Ribosomal_P0_L10e"/>
    <property type="match status" value="1"/>
</dbReference>
<dbReference type="FunFam" id="3.30.70.1730:FF:000002">
    <property type="entry name" value="60S acidic ribosomal protein P0"/>
    <property type="match status" value="1"/>
</dbReference>
<dbReference type="FunFam" id="3.90.105.20:FF:000001">
    <property type="entry name" value="60S acidic ribosomal protein P0"/>
    <property type="match status" value="1"/>
</dbReference>
<dbReference type="Gene3D" id="3.30.70.1730">
    <property type="match status" value="1"/>
</dbReference>
<dbReference type="Gene3D" id="3.90.105.20">
    <property type="match status" value="1"/>
</dbReference>
<dbReference type="InterPro" id="IPR050323">
    <property type="entry name" value="Ribosomal_protein_uL10"/>
</dbReference>
<dbReference type="InterPro" id="IPR001790">
    <property type="entry name" value="Ribosomal_uL10"/>
</dbReference>
<dbReference type="InterPro" id="IPR040637">
    <property type="entry name" value="Ribosomal_uL10-like_insert"/>
</dbReference>
<dbReference type="InterPro" id="IPR043164">
    <property type="entry name" value="Ribosomal_uL10-like_insert_sf"/>
</dbReference>
<dbReference type="InterPro" id="IPR043141">
    <property type="entry name" value="Ribosomal_uL10-like_sf"/>
</dbReference>
<dbReference type="InterPro" id="IPR030670">
    <property type="entry name" value="uL10_eukaryotes"/>
</dbReference>
<dbReference type="PANTHER" id="PTHR45699">
    <property type="entry name" value="60S ACIDIC RIBOSOMAL PROTEIN P0"/>
    <property type="match status" value="1"/>
</dbReference>
<dbReference type="PANTHER" id="PTHR45699:SF3">
    <property type="entry name" value="LARGE RIBOSOMAL SUBUNIT PROTEIN UL10"/>
    <property type="match status" value="1"/>
</dbReference>
<dbReference type="Pfam" id="PF00428">
    <property type="entry name" value="Ribosomal_60s"/>
    <property type="match status" value="1"/>
</dbReference>
<dbReference type="Pfam" id="PF00466">
    <property type="entry name" value="Ribosomal_L10"/>
    <property type="match status" value="1"/>
</dbReference>
<dbReference type="Pfam" id="PF17777">
    <property type="entry name" value="RL10P_insert"/>
    <property type="match status" value="1"/>
</dbReference>
<dbReference type="PIRSF" id="PIRSF039087">
    <property type="entry name" value="L10E"/>
    <property type="match status" value="1"/>
</dbReference>
<dbReference type="SUPFAM" id="SSF160369">
    <property type="entry name" value="Ribosomal protein L10-like"/>
    <property type="match status" value="1"/>
</dbReference>
<proteinExistence type="evidence at protein level"/>
<accession>G1SPK4</accession>
<reference key="1">
    <citation type="journal article" date="2011" name="Nature">
        <title>A high-resolution map of human evolutionary constraint using 29 mammals.</title>
        <authorList>
            <person name="Lindblad-Toh K."/>
            <person name="Garber M."/>
            <person name="Zuk O."/>
            <person name="Lin M.F."/>
            <person name="Parker B.J."/>
            <person name="Washietl S."/>
            <person name="Kheradpour P."/>
            <person name="Ernst J."/>
            <person name="Jordan G."/>
            <person name="Mauceli E."/>
            <person name="Ward L.D."/>
            <person name="Lowe C.B."/>
            <person name="Holloway A.K."/>
            <person name="Clamp M."/>
            <person name="Gnerre S."/>
            <person name="Alfoldi J."/>
            <person name="Beal K."/>
            <person name="Chang J."/>
            <person name="Clawson H."/>
            <person name="Cuff J."/>
            <person name="Di Palma F."/>
            <person name="Fitzgerald S."/>
            <person name="Flicek P."/>
            <person name="Guttman M."/>
            <person name="Hubisz M.J."/>
            <person name="Jaffe D.B."/>
            <person name="Jungreis I."/>
            <person name="Kent W.J."/>
            <person name="Kostka D."/>
            <person name="Lara M."/>
            <person name="Martins A.L."/>
            <person name="Massingham T."/>
            <person name="Moltke I."/>
            <person name="Raney B.J."/>
            <person name="Rasmussen M.D."/>
            <person name="Robinson J."/>
            <person name="Stark A."/>
            <person name="Vilella A.J."/>
            <person name="Wen J."/>
            <person name="Xie X."/>
            <person name="Zody M.C."/>
            <person name="Baldwin J."/>
            <person name="Bloom T."/>
            <person name="Chin C.W."/>
            <person name="Heiman D."/>
            <person name="Nicol R."/>
            <person name="Nusbaum C."/>
            <person name="Young S."/>
            <person name="Wilkinson J."/>
            <person name="Worley K.C."/>
            <person name="Kovar C.L."/>
            <person name="Muzny D.M."/>
            <person name="Gibbs R.A."/>
            <person name="Cree A."/>
            <person name="Dihn H.H."/>
            <person name="Fowler G."/>
            <person name="Jhangiani S."/>
            <person name="Joshi V."/>
            <person name="Lee S."/>
            <person name="Lewis L.R."/>
            <person name="Nazareth L.V."/>
            <person name="Okwuonu G."/>
            <person name="Santibanez J."/>
            <person name="Warren W.C."/>
            <person name="Mardis E.R."/>
            <person name="Weinstock G.M."/>
            <person name="Wilson R.K."/>
            <person name="Delehaunty K."/>
            <person name="Dooling D."/>
            <person name="Fronik C."/>
            <person name="Fulton L."/>
            <person name="Fulton B."/>
            <person name="Graves T."/>
            <person name="Minx P."/>
            <person name="Sodergren E."/>
            <person name="Birney E."/>
            <person name="Margulies E.H."/>
            <person name="Herrero J."/>
            <person name="Green E.D."/>
            <person name="Haussler D."/>
            <person name="Siepel A."/>
            <person name="Goldman N."/>
            <person name="Pollard K.S."/>
            <person name="Pedersen J.S."/>
            <person name="Lander E.S."/>
            <person name="Kellis M."/>
        </authorList>
    </citation>
    <scope>NUCLEOTIDE SEQUENCE [LARGE SCALE GENOMIC DNA]</scope>
    <source>
        <strain>Thorbecke</strain>
    </source>
</reference>
<reference evidence="7 8" key="2">
    <citation type="journal article" date="2020" name="Cell Rep.">
        <title>The Halastavi arva virus intergenic region IRES promotes translation by the simplest possible initiation mechanism.</title>
        <authorList>
            <person name="Abaeva I.S."/>
            <person name="Vicens Q."/>
            <person name="Bochler A."/>
            <person name="Soufari H."/>
            <person name="Simonetti A."/>
            <person name="Pestova T.V."/>
            <person name="Hashem Y."/>
            <person name="Hellen C.U.T."/>
        </authorList>
    </citation>
    <scope>STRUCTURE BY ELECTRON MICROSCOPY (3.49 ANGSTROMS) OF RIBOSOME</scope>
    <scope>SUBCELLULAR LOCATION</scope>
    <scope>SUBUNIT</scope>
</reference>
<reference evidence="9" key="3">
    <citation type="journal article" date="2022" name="Science">
        <title>Structure of the mammalian ribosome as it decodes the selenocysteine UGA codon.</title>
        <authorList>
            <person name="Hilal T."/>
            <person name="Killam B.Y."/>
            <person name="Grozdanovic M."/>
            <person name="Dobosz-Bartoszek M."/>
            <person name="Loerke J."/>
            <person name="Buerger J."/>
            <person name="Mielke T."/>
            <person name="Copeland P.R."/>
            <person name="Simonovic M."/>
            <person name="Spahn C.M.T."/>
        </authorList>
    </citation>
    <scope>STRUCTURE BY ELECTRON MICROSCOPY (2.80 ANGSTROMS) OF RIBOSOME</scope>
    <scope>SUBCELLULAR LOCATION</scope>
    <scope>SUBUNIT</scope>
</reference>
<protein>
    <recommendedName>
        <fullName>Large ribosomal subunit protein uL10</fullName>
    </recommendedName>
    <alternativeName>
        <fullName>60S acidic ribosomal protein P0</fullName>
    </alternativeName>
</protein>
<comment type="function">
    <text evidence="1">Ribosomal protein P0 is the functional equivalent of E.coli protein L10.</text>
</comment>
<comment type="subunit">
    <text evidence="1 4 5">P0 forms a pentameric complex by interaction with dimers of P1 and P2 (PubMed:33296660, PubMed:35709277). Identified in a IGF2BP1-dependent mRNP granule complex containing untranslated mRNAs. Interacts with APEX1 (By similarity). Interacts with FMR1 isoform 6 (By similarity).</text>
</comment>
<comment type="subcellular location">
    <subcellularLocation>
        <location evidence="1">Nucleus</location>
    </subcellularLocation>
    <subcellularLocation>
        <location evidence="4 5">Cytoplasm</location>
    </subcellularLocation>
    <text evidence="1">Localized in cytoplasmic mRNP granules containing untranslated mRNAs.</text>
</comment>
<comment type="PTM">
    <text evidence="1">Ubiquitinated at Lys-264 by RNF14 and RNF25 in response to ribosome collisions (ribosome stalling).</text>
</comment>
<comment type="similarity">
    <text evidence="6">Belongs to the universal ribosomal protein uL10 family.</text>
</comment>
<keyword id="KW-0002">3D-structure</keyword>
<keyword id="KW-0963">Cytoplasm</keyword>
<keyword id="KW-1017">Isopeptide bond</keyword>
<keyword id="KW-0539">Nucleus</keyword>
<keyword id="KW-0597">Phosphoprotein</keyword>
<keyword id="KW-1185">Reference proteome</keyword>
<keyword id="KW-0687">Ribonucleoprotein</keyword>
<keyword id="KW-0689">Ribosomal protein</keyword>
<keyword id="KW-0832">Ubl conjugation</keyword>
<gene>
    <name type="primary">RPLP0</name>
</gene>